<name>ISPT_STRT1</name>
<evidence type="ECO:0000255" key="1">
    <source>
        <dbReference type="HAMAP-Rule" id="MF_01139"/>
    </source>
</evidence>
<dbReference type="EC" id="2.5.1.-" evidence="1"/>
<dbReference type="EMBL" id="CP000024">
    <property type="protein sequence ID" value="AAV61811.1"/>
    <property type="molecule type" value="Genomic_DNA"/>
</dbReference>
<dbReference type="RefSeq" id="WP_002949314.1">
    <property type="nucleotide sequence ID" value="NC_006449.1"/>
</dbReference>
<dbReference type="SMR" id="Q5M1N6"/>
<dbReference type="KEGG" id="stc:str0197"/>
<dbReference type="HOGENOM" id="CLU_038505_1_1_9"/>
<dbReference type="GO" id="GO:0005829">
    <property type="term" value="C:cytosol"/>
    <property type="evidence" value="ECO:0007669"/>
    <property type="project" value="TreeGrafter"/>
</dbReference>
<dbReference type="GO" id="GO:0008834">
    <property type="term" value="F:ditrans,polycis-undecaprenyl-diphosphate synthase [(2E,6E)-farnesyl-diphosphate specific] activity"/>
    <property type="evidence" value="ECO:0007669"/>
    <property type="project" value="TreeGrafter"/>
</dbReference>
<dbReference type="GO" id="GO:0000287">
    <property type="term" value="F:magnesium ion binding"/>
    <property type="evidence" value="ECO:0007669"/>
    <property type="project" value="UniProtKB-UniRule"/>
</dbReference>
<dbReference type="GO" id="GO:0030145">
    <property type="term" value="F:manganese ion binding"/>
    <property type="evidence" value="ECO:0007669"/>
    <property type="project" value="TreeGrafter"/>
</dbReference>
<dbReference type="GO" id="GO:0016094">
    <property type="term" value="P:polyprenol biosynthetic process"/>
    <property type="evidence" value="ECO:0007669"/>
    <property type="project" value="TreeGrafter"/>
</dbReference>
<dbReference type="CDD" id="cd00475">
    <property type="entry name" value="Cis_IPPS"/>
    <property type="match status" value="1"/>
</dbReference>
<dbReference type="FunFam" id="3.40.1180.10:FF:000001">
    <property type="entry name" value="(2E,6E)-farnesyl-diphosphate-specific ditrans,polycis-undecaprenyl-diphosphate synthase"/>
    <property type="match status" value="1"/>
</dbReference>
<dbReference type="Gene3D" id="3.40.1180.10">
    <property type="entry name" value="Decaprenyl diphosphate synthase-like"/>
    <property type="match status" value="1"/>
</dbReference>
<dbReference type="HAMAP" id="MF_01139">
    <property type="entry name" value="ISPT"/>
    <property type="match status" value="1"/>
</dbReference>
<dbReference type="InterPro" id="IPR001441">
    <property type="entry name" value="UPP_synth-like"/>
</dbReference>
<dbReference type="InterPro" id="IPR018520">
    <property type="entry name" value="UPP_synth-like_CS"/>
</dbReference>
<dbReference type="InterPro" id="IPR036424">
    <property type="entry name" value="UPP_synth-like_sf"/>
</dbReference>
<dbReference type="NCBIfam" id="NF011405">
    <property type="entry name" value="PRK14830.1"/>
    <property type="match status" value="1"/>
</dbReference>
<dbReference type="NCBIfam" id="TIGR00055">
    <property type="entry name" value="uppS"/>
    <property type="match status" value="1"/>
</dbReference>
<dbReference type="PANTHER" id="PTHR10291:SF0">
    <property type="entry name" value="DEHYDRODOLICHYL DIPHOSPHATE SYNTHASE 2"/>
    <property type="match status" value="1"/>
</dbReference>
<dbReference type="PANTHER" id="PTHR10291">
    <property type="entry name" value="DEHYDRODOLICHYL DIPHOSPHATE SYNTHASE FAMILY MEMBER"/>
    <property type="match status" value="1"/>
</dbReference>
<dbReference type="Pfam" id="PF01255">
    <property type="entry name" value="Prenyltransf"/>
    <property type="match status" value="1"/>
</dbReference>
<dbReference type="SUPFAM" id="SSF64005">
    <property type="entry name" value="Undecaprenyl diphosphate synthase"/>
    <property type="match status" value="1"/>
</dbReference>
<dbReference type="PROSITE" id="PS01066">
    <property type="entry name" value="UPP_SYNTHASE"/>
    <property type="match status" value="1"/>
</dbReference>
<organism>
    <name type="scientific">Streptococcus thermophilus (strain CNRZ 1066)</name>
    <dbReference type="NCBI Taxonomy" id="299768"/>
    <lineage>
        <taxon>Bacteria</taxon>
        <taxon>Bacillati</taxon>
        <taxon>Bacillota</taxon>
        <taxon>Bacilli</taxon>
        <taxon>Lactobacillales</taxon>
        <taxon>Streptococcaceae</taxon>
        <taxon>Streptococcus</taxon>
    </lineage>
</organism>
<reference key="1">
    <citation type="journal article" date="2004" name="Nat. Biotechnol.">
        <title>Complete sequence and comparative genome analysis of the dairy bacterium Streptococcus thermophilus.</title>
        <authorList>
            <person name="Bolotin A."/>
            <person name="Quinquis B."/>
            <person name="Renault P."/>
            <person name="Sorokin A."/>
            <person name="Ehrlich S.D."/>
            <person name="Kulakauskas S."/>
            <person name="Lapidus A."/>
            <person name="Goltsman E."/>
            <person name="Mazur M."/>
            <person name="Pusch G.D."/>
            <person name="Fonstein M."/>
            <person name="Overbeek R."/>
            <person name="Kyprides N."/>
            <person name="Purnelle B."/>
            <person name="Prozzi D."/>
            <person name="Ngui K."/>
            <person name="Masuy D."/>
            <person name="Hancy F."/>
            <person name="Burteau S."/>
            <person name="Boutry M."/>
            <person name="Delcour J."/>
            <person name="Goffeau A."/>
            <person name="Hols P."/>
        </authorList>
    </citation>
    <scope>NUCLEOTIDE SEQUENCE [LARGE SCALE GENOMIC DNA]</scope>
    <source>
        <strain>CNRZ 1066</strain>
    </source>
</reference>
<accession>Q5M1N6</accession>
<sequence>MFKFRKKSHQEVLDNIPNHIGIIMDGNGRWAKKRLQPRVMGHKAGMDALQKVTIEASQLGVKVLTVYAFSTENWSRPQDEVKFIMNLPVEFFNKYVPELDKNNVRILTIGDNSRLPKETLDALEKAVEQTKHNSGLILNFALNYGGRAEIVSAVQAIAKEVEIGRLRPEAIDEDLIAKHLMTDKLPYLYRDPDLIIRTSGELRLSNFLPWQSAYSEFYFTDVFWPDFDQQGLHQAISDYNKRHRRFGGV</sequence>
<proteinExistence type="inferred from homology"/>
<keyword id="KW-0460">Magnesium</keyword>
<keyword id="KW-0479">Metal-binding</keyword>
<keyword id="KW-0808">Transferase</keyword>
<gene>
    <name evidence="1" type="primary">uppS</name>
    <name type="ordered locus">str0197</name>
</gene>
<comment type="function">
    <text evidence="1">Catalyzes the condensation of isopentenyl diphosphate (IPP) with allylic pyrophosphates generating different type of terpenoids.</text>
</comment>
<comment type="cofactor">
    <cofactor evidence="1">
        <name>Mg(2+)</name>
        <dbReference type="ChEBI" id="CHEBI:18420"/>
    </cofactor>
    <text evidence="1">Binds 2 magnesium ions per subunit.</text>
</comment>
<comment type="subunit">
    <text evidence="1">Homodimer.</text>
</comment>
<comment type="similarity">
    <text evidence="1">Belongs to the UPP synthase family.</text>
</comment>
<feature type="chain" id="PRO_0000123696" description="Isoprenyl transferase">
    <location>
        <begin position="1"/>
        <end position="249"/>
    </location>
</feature>
<feature type="active site" evidence="1">
    <location>
        <position position="25"/>
    </location>
</feature>
<feature type="active site" description="Proton acceptor" evidence="1">
    <location>
        <position position="73"/>
    </location>
</feature>
<feature type="binding site" evidence="1">
    <location>
        <position position="25"/>
    </location>
    <ligand>
        <name>Mg(2+)</name>
        <dbReference type="ChEBI" id="CHEBI:18420"/>
    </ligand>
</feature>
<feature type="binding site" evidence="1">
    <location>
        <begin position="26"/>
        <end position="29"/>
    </location>
    <ligand>
        <name>substrate</name>
    </ligand>
</feature>
<feature type="binding site" evidence="1">
    <location>
        <position position="30"/>
    </location>
    <ligand>
        <name>substrate</name>
    </ligand>
</feature>
<feature type="binding site" evidence="1">
    <location>
        <position position="38"/>
    </location>
    <ligand>
        <name>substrate</name>
    </ligand>
</feature>
<feature type="binding site" evidence="1">
    <location>
        <position position="42"/>
    </location>
    <ligand>
        <name>substrate</name>
    </ligand>
</feature>
<feature type="binding site" evidence="1">
    <location>
        <begin position="70"/>
        <end position="72"/>
    </location>
    <ligand>
        <name>substrate</name>
    </ligand>
</feature>
<feature type="binding site" evidence="1">
    <location>
        <position position="74"/>
    </location>
    <ligand>
        <name>substrate</name>
    </ligand>
</feature>
<feature type="binding site" evidence="1">
    <location>
        <position position="76"/>
    </location>
    <ligand>
        <name>substrate</name>
    </ligand>
</feature>
<feature type="binding site" evidence="1">
    <location>
        <position position="197"/>
    </location>
    <ligand>
        <name>substrate</name>
    </ligand>
</feature>
<feature type="binding site" evidence="1">
    <location>
        <begin position="203"/>
        <end position="205"/>
    </location>
    <ligand>
        <name>substrate</name>
    </ligand>
</feature>
<feature type="binding site" evidence="1">
    <location>
        <position position="216"/>
    </location>
    <ligand>
        <name>Mg(2+)</name>
        <dbReference type="ChEBI" id="CHEBI:18420"/>
    </ligand>
</feature>
<protein>
    <recommendedName>
        <fullName evidence="1">Isoprenyl transferase</fullName>
        <ecNumber evidence="1">2.5.1.-</ecNumber>
    </recommendedName>
</protein>